<sequence length="93" mass="10633">MFCSIYKSTKKQGAYLYIEKKDDFAPVPQELMSMFGTPTMVMVVNLEGRKLASVDVEKVKTAIKENGFFLQLPPPPENLLEKYKKDKAAREEN</sequence>
<name>Y1829_ALIFM</name>
<protein>
    <recommendedName>
        <fullName evidence="1">YcgL domain-containing protein VFMJ11_1829</fullName>
    </recommendedName>
</protein>
<evidence type="ECO:0000255" key="1">
    <source>
        <dbReference type="HAMAP-Rule" id="MF_01866"/>
    </source>
</evidence>
<gene>
    <name type="ordered locus">VFMJ11_1829</name>
</gene>
<reference key="1">
    <citation type="submission" date="2008-08" db="EMBL/GenBank/DDBJ databases">
        <title>Complete sequence of Vibrio fischeri strain MJ11.</title>
        <authorList>
            <person name="Mandel M.J."/>
            <person name="Stabb E.V."/>
            <person name="Ruby E.G."/>
            <person name="Ferriera S."/>
            <person name="Johnson J."/>
            <person name="Kravitz S."/>
            <person name="Beeson K."/>
            <person name="Sutton G."/>
            <person name="Rogers Y.-H."/>
            <person name="Friedman R."/>
            <person name="Frazier M."/>
            <person name="Venter J.C."/>
        </authorList>
    </citation>
    <scope>NUCLEOTIDE SEQUENCE [LARGE SCALE GENOMIC DNA]</scope>
    <source>
        <strain>MJ11</strain>
    </source>
</reference>
<organism>
    <name type="scientific">Aliivibrio fischeri (strain MJ11)</name>
    <name type="common">Vibrio fischeri</name>
    <dbReference type="NCBI Taxonomy" id="388396"/>
    <lineage>
        <taxon>Bacteria</taxon>
        <taxon>Pseudomonadati</taxon>
        <taxon>Pseudomonadota</taxon>
        <taxon>Gammaproteobacteria</taxon>
        <taxon>Vibrionales</taxon>
        <taxon>Vibrionaceae</taxon>
        <taxon>Aliivibrio</taxon>
    </lineage>
</organism>
<accession>B5FFP4</accession>
<feature type="chain" id="PRO_0000375396" description="YcgL domain-containing protein VFMJ11_1829">
    <location>
        <begin position="1"/>
        <end position="93"/>
    </location>
</feature>
<feature type="domain" description="YcgL" evidence="1">
    <location>
        <begin position="1"/>
        <end position="84"/>
    </location>
</feature>
<proteinExistence type="inferred from homology"/>
<dbReference type="EMBL" id="CP001139">
    <property type="protein sequence ID" value="ACH67058.1"/>
    <property type="molecule type" value="Genomic_DNA"/>
</dbReference>
<dbReference type="RefSeq" id="WP_005420040.1">
    <property type="nucleotide sequence ID" value="NC_011184.1"/>
</dbReference>
<dbReference type="SMR" id="B5FFP4"/>
<dbReference type="KEGG" id="vfm:VFMJ11_1829"/>
<dbReference type="HOGENOM" id="CLU_155118_1_0_6"/>
<dbReference type="Proteomes" id="UP000001857">
    <property type="component" value="Chromosome I"/>
</dbReference>
<dbReference type="Gene3D" id="3.10.510.20">
    <property type="entry name" value="YcgL domain"/>
    <property type="match status" value="1"/>
</dbReference>
<dbReference type="HAMAP" id="MF_01866">
    <property type="entry name" value="UPF0745"/>
    <property type="match status" value="1"/>
</dbReference>
<dbReference type="InterPro" id="IPR038068">
    <property type="entry name" value="YcgL-like_sf"/>
</dbReference>
<dbReference type="InterPro" id="IPR027354">
    <property type="entry name" value="YcgL_dom"/>
</dbReference>
<dbReference type="PANTHER" id="PTHR38109">
    <property type="entry name" value="PROTEIN YCGL"/>
    <property type="match status" value="1"/>
</dbReference>
<dbReference type="PANTHER" id="PTHR38109:SF1">
    <property type="entry name" value="PROTEIN YCGL"/>
    <property type="match status" value="1"/>
</dbReference>
<dbReference type="Pfam" id="PF05166">
    <property type="entry name" value="YcgL"/>
    <property type="match status" value="1"/>
</dbReference>
<dbReference type="SUPFAM" id="SSF160191">
    <property type="entry name" value="YcgL-like"/>
    <property type="match status" value="1"/>
</dbReference>
<dbReference type="PROSITE" id="PS51648">
    <property type="entry name" value="YCGL"/>
    <property type="match status" value="1"/>
</dbReference>